<gene>
    <name evidence="1" type="primary">lolA</name>
    <name type="ordered locus">Fphi_0532</name>
</gene>
<feature type="signal peptide" evidence="1">
    <location>
        <begin position="1"/>
        <end position="21"/>
    </location>
</feature>
<feature type="chain" id="PRO_5000309215" description="Outer-membrane lipoprotein carrier protein">
    <location>
        <begin position="22"/>
        <end position="205"/>
    </location>
</feature>
<dbReference type="EMBL" id="CP000937">
    <property type="protein sequence ID" value="ABZ86750.1"/>
    <property type="molecule type" value="Genomic_DNA"/>
</dbReference>
<dbReference type="SMR" id="B0U0J9"/>
<dbReference type="KEGG" id="fph:Fphi_0532"/>
<dbReference type="eggNOG" id="COG2834">
    <property type="taxonomic scope" value="Bacteria"/>
</dbReference>
<dbReference type="HOGENOM" id="CLU_087560_0_0_6"/>
<dbReference type="GO" id="GO:0030288">
    <property type="term" value="C:outer membrane-bounded periplasmic space"/>
    <property type="evidence" value="ECO:0007669"/>
    <property type="project" value="TreeGrafter"/>
</dbReference>
<dbReference type="GO" id="GO:0044874">
    <property type="term" value="P:lipoprotein localization to outer membrane"/>
    <property type="evidence" value="ECO:0007669"/>
    <property type="project" value="UniProtKB-UniRule"/>
</dbReference>
<dbReference type="GO" id="GO:0042953">
    <property type="term" value="P:lipoprotein transport"/>
    <property type="evidence" value="ECO:0007669"/>
    <property type="project" value="InterPro"/>
</dbReference>
<dbReference type="CDD" id="cd16325">
    <property type="entry name" value="LolA"/>
    <property type="match status" value="1"/>
</dbReference>
<dbReference type="Gene3D" id="2.50.20.10">
    <property type="entry name" value="Lipoprotein localisation LolA/LolB/LppX"/>
    <property type="match status" value="1"/>
</dbReference>
<dbReference type="HAMAP" id="MF_00240">
    <property type="entry name" value="LolA"/>
    <property type="match status" value="1"/>
</dbReference>
<dbReference type="InterPro" id="IPR029046">
    <property type="entry name" value="LolA/LolB/LppX"/>
</dbReference>
<dbReference type="InterPro" id="IPR004564">
    <property type="entry name" value="OM_lipoprot_carrier_LolA-like"/>
</dbReference>
<dbReference type="InterPro" id="IPR018323">
    <property type="entry name" value="OM_lipoprot_carrier_LolA_Pbac"/>
</dbReference>
<dbReference type="NCBIfam" id="TIGR00547">
    <property type="entry name" value="lolA"/>
    <property type="match status" value="1"/>
</dbReference>
<dbReference type="PANTHER" id="PTHR35869">
    <property type="entry name" value="OUTER-MEMBRANE LIPOPROTEIN CARRIER PROTEIN"/>
    <property type="match status" value="1"/>
</dbReference>
<dbReference type="PANTHER" id="PTHR35869:SF1">
    <property type="entry name" value="OUTER-MEMBRANE LIPOPROTEIN CARRIER PROTEIN"/>
    <property type="match status" value="1"/>
</dbReference>
<dbReference type="Pfam" id="PF03548">
    <property type="entry name" value="LolA"/>
    <property type="match status" value="1"/>
</dbReference>
<dbReference type="SUPFAM" id="SSF89392">
    <property type="entry name" value="Prokaryotic lipoproteins and lipoprotein localization factors"/>
    <property type="match status" value="1"/>
</dbReference>
<protein>
    <recommendedName>
        <fullName evidence="1">Outer-membrane lipoprotein carrier protein</fullName>
    </recommendedName>
</protein>
<keyword id="KW-0143">Chaperone</keyword>
<keyword id="KW-0574">Periplasm</keyword>
<keyword id="KW-0653">Protein transport</keyword>
<keyword id="KW-0732">Signal</keyword>
<keyword id="KW-0813">Transport</keyword>
<proteinExistence type="inferred from homology"/>
<organism>
    <name type="scientific">Francisella philomiragia subsp. philomiragia (strain ATCC 25017 / CCUG 19701 / FSC 153 / O#319-036)</name>
    <dbReference type="NCBI Taxonomy" id="484022"/>
    <lineage>
        <taxon>Bacteria</taxon>
        <taxon>Pseudomonadati</taxon>
        <taxon>Pseudomonadota</taxon>
        <taxon>Gammaproteobacteria</taxon>
        <taxon>Thiotrichales</taxon>
        <taxon>Francisellaceae</taxon>
        <taxon>Francisella</taxon>
    </lineage>
</organism>
<accession>B0U0J9</accession>
<comment type="function">
    <text evidence="1">Participates in the translocation of lipoproteins from the inner membrane to the outer membrane. Only forms a complex with a lipoprotein if the residue after the N-terminal Cys is not an aspartate (The Asp acts as a targeting signal to indicate that the lipoprotein should stay in the inner membrane).</text>
</comment>
<comment type="subunit">
    <text evidence="1">Monomer.</text>
</comment>
<comment type="subcellular location">
    <subcellularLocation>
        <location evidence="1">Periplasm</location>
    </subcellularLocation>
</comment>
<comment type="similarity">
    <text evidence="1">Belongs to the LolA family.</text>
</comment>
<evidence type="ECO:0000255" key="1">
    <source>
        <dbReference type="HAMAP-Rule" id="MF_00240"/>
    </source>
</evidence>
<sequence>MKKIVLLVTLVFSINYSFANASDDLINKIKNIHSMSASFDQKLINGGRASDNISSKGYMSLKKPKFFRWITTTPNNQEIISNGSKLWIYDGDLEQVIIKKVSNNIAQFPYLILLSKNTDNINKLFTVKELDKNTYLLKPKNDQMIDSIQIKFSDNENLEYLAISTSLNQFTKISFSDVKTDIDIDNNKFDFKIPDDTDVIDETKD</sequence>
<reference key="1">
    <citation type="submission" date="2007-12" db="EMBL/GenBank/DDBJ databases">
        <title>Complete sequence of chromosome of Francisella philomiragia subsp. philomiragia ATCC 25017.</title>
        <authorList>
            <consortium name="US DOE Joint Genome Institute"/>
            <person name="Copeland A."/>
            <person name="Lucas S."/>
            <person name="Lapidus A."/>
            <person name="Barry K."/>
            <person name="Detter J.C."/>
            <person name="Glavina del Rio T."/>
            <person name="Hammon N."/>
            <person name="Israni S."/>
            <person name="Dalin E."/>
            <person name="Tice H."/>
            <person name="Pitluck S."/>
            <person name="Chain P."/>
            <person name="Malfatti S."/>
            <person name="Shin M."/>
            <person name="Vergez L."/>
            <person name="Schmutz J."/>
            <person name="Larimer F."/>
            <person name="Land M."/>
            <person name="Hauser L."/>
            <person name="Richardson P."/>
        </authorList>
    </citation>
    <scope>NUCLEOTIDE SEQUENCE [LARGE SCALE GENOMIC DNA]</scope>
    <source>
        <strain>ATCC 25017 / CCUG 19701 / FSC 153 / O#319-036</strain>
    </source>
</reference>
<name>LOLA_FRAP2</name>